<reference key="1">
    <citation type="journal article" date="2009" name="PLoS Genet.">
        <title>Organised genome dynamics in the Escherichia coli species results in highly diverse adaptive paths.</title>
        <authorList>
            <person name="Touchon M."/>
            <person name="Hoede C."/>
            <person name="Tenaillon O."/>
            <person name="Barbe V."/>
            <person name="Baeriswyl S."/>
            <person name="Bidet P."/>
            <person name="Bingen E."/>
            <person name="Bonacorsi S."/>
            <person name="Bouchier C."/>
            <person name="Bouvet O."/>
            <person name="Calteau A."/>
            <person name="Chiapello H."/>
            <person name="Clermont O."/>
            <person name="Cruveiller S."/>
            <person name="Danchin A."/>
            <person name="Diard M."/>
            <person name="Dossat C."/>
            <person name="Karoui M.E."/>
            <person name="Frapy E."/>
            <person name="Garry L."/>
            <person name="Ghigo J.M."/>
            <person name="Gilles A.M."/>
            <person name="Johnson J."/>
            <person name="Le Bouguenec C."/>
            <person name="Lescat M."/>
            <person name="Mangenot S."/>
            <person name="Martinez-Jehanne V."/>
            <person name="Matic I."/>
            <person name="Nassif X."/>
            <person name="Oztas S."/>
            <person name="Petit M.A."/>
            <person name="Pichon C."/>
            <person name="Rouy Z."/>
            <person name="Ruf C.S."/>
            <person name="Schneider D."/>
            <person name="Tourret J."/>
            <person name="Vacherie B."/>
            <person name="Vallenet D."/>
            <person name="Medigue C."/>
            <person name="Rocha E.P.C."/>
            <person name="Denamur E."/>
        </authorList>
    </citation>
    <scope>NUCLEOTIDE SEQUENCE [LARGE SCALE GENOMIC DNA]</scope>
    <source>
        <strain>IAI1</strain>
    </source>
</reference>
<organism>
    <name type="scientific">Escherichia coli O8 (strain IAI1)</name>
    <dbReference type="NCBI Taxonomy" id="585034"/>
    <lineage>
        <taxon>Bacteria</taxon>
        <taxon>Pseudomonadati</taxon>
        <taxon>Pseudomonadota</taxon>
        <taxon>Gammaproteobacteria</taxon>
        <taxon>Enterobacterales</taxon>
        <taxon>Enterobacteriaceae</taxon>
        <taxon>Escherichia</taxon>
    </lineage>
</organism>
<sequence length="315" mass="34168">MSESLRIIFAGTPDFAARHLDALLSSGHNVVGVFTQPDRPAGRGKKLMPSPIKVLAEEKGLPVFQPVSLRPQENQQLVADLQADVMVVVAYGLILPKAVLEMPRLGCINVHGSLLPRWRGAAPIQRSLWAGDAETGVTIMQMDVGLDTGDMLYKLSCPITAEDTSGTLYDKLAELGPQGLITTLKQLADGTAKPEVQDETLVTYAEKLSKEEARIDWSLSAAQLERCIRAFNPWPMSWLEIEGQPVKVWKASVIDTATNAAPGTILEANKQGIQVATGDGILNLLSLQPAGKKAMSAQDLLNSRREWFVPGNRLV</sequence>
<name>FMT_ECO8A</name>
<accession>B7M0Z3</accession>
<protein>
    <recommendedName>
        <fullName evidence="1">Methionyl-tRNA formyltransferase</fullName>
        <ecNumber evidence="1">2.1.2.9</ecNumber>
    </recommendedName>
</protein>
<evidence type="ECO:0000255" key="1">
    <source>
        <dbReference type="HAMAP-Rule" id="MF_00182"/>
    </source>
</evidence>
<feature type="chain" id="PRO_1000118478" description="Methionyl-tRNA formyltransferase">
    <location>
        <begin position="1"/>
        <end position="315"/>
    </location>
</feature>
<feature type="binding site" evidence="1">
    <location>
        <begin position="113"/>
        <end position="116"/>
    </location>
    <ligand>
        <name>(6S)-5,6,7,8-tetrahydrofolate</name>
        <dbReference type="ChEBI" id="CHEBI:57453"/>
    </ligand>
</feature>
<keyword id="KW-0648">Protein biosynthesis</keyword>
<keyword id="KW-0808">Transferase</keyword>
<proteinExistence type="inferred from homology"/>
<dbReference type="EC" id="2.1.2.9" evidence="1"/>
<dbReference type="EMBL" id="CU928160">
    <property type="protein sequence ID" value="CAR00239.1"/>
    <property type="molecule type" value="Genomic_DNA"/>
</dbReference>
<dbReference type="RefSeq" id="WP_000004432.1">
    <property type="nucleotide sequence ID" value="NC_011741.1"/>
</dbReference>
<dbReference type="SMR" id="B7M0Z3"/>
<dbReference type="GeneID" id="75204130"/>
<dbReference type="KEGG" id="ecr:ECIAI1_3437"/>
<dbReference type="HOGENOM" id="CLU_033347_1_2_6"/>
<dbReference type="GO" id="GO:0005829">
    <property type="term" value="C:cytosol"/>
    <property type="evidence" value="ECO:0007669"/>
    <property type="project" value="TreeGrafter"/>
</dbReference>
<dbReference type="GO" id="GO:0004479">
    <property type="term" value="F:methionyl-tRNA formyltransferase activity"/>
    <property type="evidence" value="ECO:0007669"/>
    <property type="project" value="UniProtKB-UniRule"/>
</dbReference>
<dbReference type="CDD" id="cd08646">
    <property type="entry name" value="FMT_core_Met-tRNA-FMT_N"/>
    <property type="match status" value="1"/>
</dbReference>
<dbReference type="CDD" id="cd08704">
    <property type="entry name" value="Met_tRNA_FMT_C"/>
    <property type="match status" value="1"/>
</dbReference>
<dbReference type="FunFam" id="3.10.25.10:FF:000001">
    <property type="entry name" value="Methionyl-tRNA formyltransferase"/>
    <property type="match status" value="1"/>
</dbReference>
<dbReference type="FunFam" id="3.40.50.12230:FF:000001">
    <property type="entry name" value="Methionyl-tRNA formyltransferase"/>
    <property type="match status" value="1"/>
</dbReference>
<dbReference type="FunFam" id="3.40.50.170:FF:000003">
    <property type="entry name" value="Methionyl-tRNA formyltransferase"/>
    <property type="match status" value="1"/>
</dbReference>
<dbReference type="Gene3D" id="3.10.25.10">
    <property type="entry name" value="Formyl transferase, C-terminal domain"/>
    <property type="match status" value="1"/>
</dbReference>
<dbReference type="Gene3D" id="3.40.50.170">
    <property type="entry name" value="Formyl transferase, N-terminal domain"/>
    <property type="match status" value="1"/>
</dbReference>
<dbReference type="HAMAP" id="MF_00182">
    <property type="entry name" value="Formyl_trans"/>
    <property type="match status" value="1"/>
</dbReference>
<dbReference type="InterPro" id="IPR005794">
    <property type="entry name" value="Fmt"/>
</dbReference>
<dbReference type="InterPro" id="IPR005793">
    <property type="entry name" value="Formyl_trans_C"/>
</dbReference>
<dbReference type="InterPro" id="IPR037022">
    <property type="entry name" value="Formyl_trans_C_sf"/>
</dbReference>
<dbReference type="InterPro" id="IPR002376">
    <property type="entry name" value="Formyl_transf_N"/>
</dbReference>
<dbReference type="InterPro" id="IPR036477">
    <property type="entry name" value="Formyl_transf_N_sf"/>
</dbReference>
<dbReference type="InterPro" id="IPR011034">
    <property type="entry name" value="Formyl_transferase-like_C_sf"/>
</dbReference>
<dbReference type="InterPro" id="IPR001555">
    <property type="entry name" value="GART_AS"/>
</dbReference>
<dbReference type="InterPro" id="IPR044135">
    <property type="entry name" value="Met-tRNA-FMT_C"/>
</dbReference>
<dbReference type="InterPro" id="IPR041711">
    <property type="entry name" value="Met-tRNA-FMT_N"/>
</dbReference>
<dbReference type="NCBIfam" id="TIGR00460">
    <property type="entry name" value="fmt"/>
    <property type="match status" value="1"/>
</dbReference>
<dbReference type="PANTHER" id="PTHR11138">
    <property type="entry name" value="METHIONYL-TRNA FORMYLTRANSFERASE"/>
    <property type="match status" value="1"/>
</dbReference>
<dbReference type="PANTHER" id="PTHR11138:SF5">
    <property type="entry name" value="METHIONYL-TRNA FORMYLTRANSFERASE, MITOCHONDRIAL"/>
    <property type="match status" value="1"/>
</dbReference>
<dbReference type="Pfam" id="PF02911">
    <property type="entry name" value="Formyl_trans_C"/>
    <property type="match status" value="1"/>
</dbReference>
<dbReference type="Pfam" id="PF00551">
    <property type="entry name" value="Formyl_trans_N"/>
    <property type="match status" value="1"/>
</dbReference>
<dbReference type="SUPFAM" id="SSF50486">
    <property type="entry name" value="FMT C-terminal domain-like"/>
    <property type="match status" value="1"/>
</dbReference>
<dbReference type="SUPFAM" id="SSF53328">
    <property type="entry name" value="Formyltransferase"/>
    <property type="match status" value="1"/>
</dbReference>
<dbReference type="PROSITE" id="PS00373">
    <property type="entry name" value="GART"/>
    <property type="match status" value="1"/>
</dbReference>
<gene>
    <name evidence="1" type="primary">fmt</name>
    <name type="ordered locus">ECIAI1_3437</name>
</gene>
<comment type="function">
    <text evidence="1">Attaches a formyl group to the free amino group of methionyl-tRNA(fMet). The formyl group appears to play a dual role in the initiator identity of N-formylmethionyl-tRNA by promoting its recognition by IF2 and preventing the misappropriation of this tRNA by the elongation apparatus.</text>
</comment>
<comment type="catalytic activity">
    <reaction evidence="1">
        <text>L-methionyl-tRNA(fMet) + (6R)-10-formyltetrahydrofolate = N-formyl-L-methionyl-tRNA(fMet) + (6S)-5,6,7,8-tetrahydrofolate + H(+)</text>
        <dbReference type="Rhea" id="RHEA:24380"/>
        <dbReference type="Rhea" id="RHEA-COMP:9952"/>
        <dbReference type="Rhea" id="RHEA-COMP:9953"/>
        <dbReference type="ChEBI" id="CHEBI:15378"/>
        <dbReference type="ChEBI" id="CHEBI:57453"/>
        <dbReference type="ChEBI" id="CHEBI:78530"/>
        <dbReference type="ChEBI" id="CHEBI:78844"/>
        <dbReference type="ChEBI" id="CHEBI:195366"/>
        <dbReference type="EC" id="2.1.2.9"/>
    </reaction>
</comment>
<comment type="similarity">
    <text evidence="1">Belongs to the Fmt family.</text>
</comment>